<proteinExistence type="evidence at protein level"/>
<evidence type="ECO:0000250" key="1"/>
<evidence type="ECO:0000255" key="2">
    <source>
        <dbReference type="PROSITE-ProRule" id="PRU01020"/>
    </source>
</evidence>
<evidence type="ECO:0000256" key="3">
    <source>
        <dbReference type="SAM" id="MobiDB-lite"/>
    </source>
</evidence>
<evidence type="ECO:0000269" key="4">
    <source>
    </source>
</evidence>
<evidence type="ECO:0000303" key="5">
    <source>
    </source>
</evidence>
<evidence type="ECO:0000305" key="6">
    <source>
    </source>
</evidence>
<dbReference type="EC" id="2.1.1.4" evidence="4"/>
<dbReference type="EMBL" id="AB512670">
    <property type="protein sequence ID" value="BAI82191.1"/>
    <property type="molecule type" value="mRNA"/>
</dbReference>
<dbReference type="EMBL" id="AB512671">
    <property type="protein sequence ID" value="BAI82192.1"/>
    <property type="molecule type" value="mRNA"/>
</dbReference>
<dbReference type="EMBL" id="AB512673">
    <property type="protein sequence ID" value="BAI82194.1"/>
    <property type="molecule type" value="Genomic_DNA"/>
</dbReference>
<dbReference type="EMBL" id="AB512674">
    <property type="protein sequence ID" value="BAI82195.1"/>
    <property type="molecule type" value="Genomic_DNA"/>
</dbReference>
<dbReference type="RefSeq" id="NP_001186141.1">
    <property type="nucleotide sequence ID" value="NM_001199212.1"/>
</dbReference>
<dbReference type="RefSeq" id="NP_001295417.1">
    <property type="nucleotide sequence ID" value="NM_001308488.1"/>
</dbReference>
<dbReference type="SMR" id="D3KU66"/>
<dbReference type="FunCoup" id="D3KU66">
    <property type="interactions" value="48"/>
</dbReference>
<dbReference type="STRING" id="10090.ENSMUSP00000137135"/>
<dbReference type="GlyGen" id="D3KU66">
    <property type="glycosylation" value="1 site"/>
</dbReference>
<dbReference type="PaxDb" id="10090-ENSMUSP00000137135"/>
<dbReference type="GeneID" id="107626"/>
<dbReference type="KEGG" id="mmu:107626"/>
<dbReference type="UCSC" id="uc029xop.1">
    <property type="organism name" value="mouse"/>
</dbReference>
<dbReference type="AGR" id="MGI:96090"/>
<dbReference type="CTD" id="438"/>
<dbReference type="MGI" id="MGI:96090">
    <property type="gene designation" value="Asmt"/>
</dbReference>
<dbReference type="eggNOG" id="KOG3178">
    <property type="taxonomic scope" value="Eukaryota"/>
</dbReference>
<dbReference type="InParanoid" id="D3KU66"/>
<dbReference type="OrthoDB" id="1606438at2759"/>
<dbReference type="TreeFam" id="TF314574"/>
<dbReference type="BRENDA" id="2.1.1.4">
    <property type="organism ID" value="3474"/>
</dbReference>
<dbReference type="Reactome" id="R-MMU-209931">
    <property type="pathway name" value="Serotonin and melatonin biosynthesis"/>
</dbReference>
<dbReference type="UniPathway" id="UPA00837">
    <property type="reaction ID" value="UER00815"/>
</dbReference>
<dbReference type="BioGRID-ORCS" id="107626">
    <property type="hits" value="1 hit in 54 CRISPR screens"/>
</dbReference>
<dbReference type="PRO" id="PR:D3KU66"/>
<dbReference type="Proteomes" id="UP000000589">
    <property type="component" value="Unplaced"/>
</dbReference>
<dbReference type="RNAct" id="D3KU66">
    <property type="molecule type" value="protein"/>
</dbReference>
<dbReference type="GO" id="GO:0017096">
    <property type="term" value="F:acetylserotonin O-methyltransferase activity"/>
    <property type="evidence" value="ECO:0000314"/>
    <property type="project" value="MGI"/>
</dbReference>
<dbReference type="GO" id="GO:0046983">
    <property type="term" value="F:protein dimerization activity"/>
    <property type="evidence" value="ECO:0007669"/>
    <property type="project" value="InterPro"/>
</dbReference>
<dbReference type="GO" id="GO:0006629">
    <property type="term" value="P:lipid metabolic process"/>
    <property type="evidence" value="ECO:0007669"/>
    <property type="project" value="UniProtKB-KW"/>
</dbReference>
<dbReference type="GO" id="GO:0008584">
    <property type="term" value="P:male gonad development"/>
    <property type="evidence" value="ECO:0000315"/>
    <property type="project" value="MGI"/>
</dbReference>
<dbReference type="GO" id="GO:0030187">
    <property type="term" value="P:melatonin biosynthetic process"/>
    <property type="evidence" value="ECO:0000314"/>
    <property type="project" value="MGI"/>
</dbReference>
<dbReference type="GO" id="GO:0032259">
    <property type="term" value="P:methylation"/>
    <property type="evidence" value="ECO:0007669"/>
    <property type="project" value="UniProtKB-KW"/>
</dbReference>
<dbReference type="GO" id="GO:2000019">
    <property type="term" value="P:negative regulation of male gonad development"/>
    <property type="evidence" value="ECO:0000315"/>
    <property type="project" value="MGI"/>
</dbReference>
<dbReference type="CDD" id="cd02440">
    <property type="entry name" value="AdoMet_MTases"/>
    <property type="match status" value="1"/>
</dbReference>
<dbReference type="FunFam" id="1.10.10.10:FF:000358">
    <property type="entry name" value="Acetylserotonin O-methyltransferase"/>
    <property type="match status" value="1"/>
</dbReference>
<dbReference type="FunFam" id="3.40.50.150:FF:000146">
    <property type="entry name" value="Acetylserotonin O-methyltransferase"/>
    <property type="match status" value="1"/>
</dbReference>
<dbReference type="Gene3D" id="3.40.50.150">
    <property type="entry name" value="Vaccinia Virus protein VP39"/>
    <property type="match status" value="1"/>
</dbReference>
<dbReference type="Gene3D" id="1.10.10.10">
    <property type="entry name" value="Winged helix-like DNA-binding domain superfamily/Winged helix DNA-binding domain"/>
    <property type="match status" value="1"/>
</dbReference>
<dbReference type="InterPro" id="IPR016461">
    <property type="entry name" value="COMT-like"/>
</dbReference>
<dbReference type="InterPro" id="IPR001077">
    <property type="entry name" value="O_MeTrfase_dom"/>
</dbReference>
<dbReference type="InterPro" id="IPR012967">
    <property type="entry name" value="Plant_O-MeTrfase_dimerisation"/>
</dbReference>
<dbReference type="InterPro" id="IPR029063">
    <property type="entry name" value="SAM-dependent_MTases_sf"/>
</dbReference>
<dbReference type="InterPro" id="IPR036388">
    <property type="entry name" value="WH-like_DNA-bd_sf"/>
</dbReference>
<dbReference type="InterPro" id="IPR036390">
    <property type="entry name" value="WH_DNA-bd_sf"/>
</dbReference>
<dbReference type="PANTHER" id="PTHR43712:SF2">
    <property type="entry name" value="O-METHYLTRANSFERASE CICE"/>
    <property type="match status" value="1"/>
</dbReference>
<dbReference type="PANTHER" id="PTHR43712">
    <property type="entry name" value="PUTATIVE (AFU_ORTHOLOGUE AFUA_4G14580)-RELATED"/>
    <property type="match status" value="1"/>
</dbReference>
<dbReference type="Pfam" id="PF08100">
    <property type="entry name" value="Dimerisation"/>
    <property type="match status" value="1"/>
</dbReference>
<dbReference type="Pfam" id="PF00891">
    <property type="entry name" value="Methyltransf_2"/>
    <property type="match status" value="1"/>
</dbReference>
<dbReference type="PIRSF" id="PIRSF005739">
    <property type="entry name" value="O-mtase"/>
    <property type="match status" value="1"/>
</dbReference>
<dbReference type="SUPFAM" id="SSF53335">
    <property type="entry name" value="S-adenosyl-L-methionine-dependent methyltransferases"/>
    <property type="match status" value="1"/>
</dbReference>
<dbReference type="SUPFAM" id="SSF46785">
    <property type="entry name" value="Winged helix' DNA-binding domain"/>
    <property type="match status" value="1"/>
</dbReference>
<dbReference type="PROSITE" id="PS51683">
    <property type="entry name" value="SAM_OMT_II"/>
    <property type="match status" value="1"/>
</dbReference>
<feature type="chain" id="PRO_0000414794" description="Acetylserotonin O-methyltransferase">
    <location>
        <begin position="1"/>
        <end position="387"/>
    </location>
</feature>
<feature type="region of interest" description="Disordered" evidence="3">
    <location>
        <begin position="354"/>
        <end position="387"/>
    </location>
</feature>
<feature type="compositionally biased region" description="Gly residues" evidence="3">
    <location>
        <begin position="356"/>
        <end position="370"/>
    </location>
</feature>
<feature type="active site" description="Proton donor/acceptor" evidence="1">
    <location>
        <position position="266"/>
    </location>
</feature>
<feature type="binding site" evidence="2">
    <location>
        <position position="153"/>
    </location>
    <ligand>
        <name>S-adenosyl-L-methionine</name>
        <dbReference type="ChEBI" id="CHEBI:59789"/>
    </ligand>
</feature>
<feature type="binding site" evidence="2">
    <location>
        <position position="170"/>
    </location>
    <ligand>
        <name>S-adenosyl-L-methionine</name>
        <dbReference type="ChEBI" id="CHEBI:59789"/>
    </ligand>
</feature>
<feature type="binding site" evidence="2">
    <location>
        <position position="216"/>
    </location>
    <ligand>
        <name>S-adenosyl-L-methionine</name>
        <dbReference type="ChEBI" id="CHEBI:59789"/>
    </ligand>
</feature>
<feature type="binding site" evidence="2">
    <location>
        <begin position="246"/>
        <end position="248"/>
    </location>
    <ligand>
        <name>S-adenosyl-L-methionine</name>
        <dbReference type="ChEBI" id="CHEBI:59789"/>
    </ligand>
</feature>
<feature type="binding site" evidence="2">
    <location>
        <position position="263"/>
    </location>
    <ligand>
        <name>S-adenosyl-L-methionine</name>
        <dbReference type="ChEBI" id="CHEBI:59789"/>
    </ligand>
</feature>
<feature type="binding site" evidence="1">
    <location>
        <position position="267"/>
    </location>
    <ligand>
        <name>substrate</name>
    </ligand>
</feature>
<feature type="binding site" evidence="1">
    <location>
        <position position="317"/>
    </location>
    <ligand>
        <name>substrate</name>
    </ligand>
</feature>
<feature type="sequence variant" description="In strain: C57BL/6J, 129/Sv, BALB/c, FVB/N and more; reduces protein expression." evidence="4">
    <original>R</original>
    <variation>G</variation>
    <location>
        <position position="78"/>
    </location>
</feature>
<feature type="sequence variant" description="In strain: C57BL/6J, 129/Sv, BALB/c, FVB/N and more; reduces protein expression." evidence="4">
    <original>R</original>
    <variation>C</variation>
    <location>
        <position position="242"/>
    </location>
</feature>
<keyword id="KW-0443">Lipid metabolism</keyword>
<keyword id="KW-0471">Melatonin biosynthesis</keyword>
<keyword id="KW-0489">Methyltransferase</keyword>
<keyword id="KW-1185">Reference proteome</keyword>
<keyword id="KW-0949">S-adenosyl-L-methionine</keyword>
<keyword id="KW-0808">Transferase</keyword>
<gene>
    <name type="primary">Asmt</name>
    <name evidence="5" type="synonym">Hiomt</name>
</gene>
<comment type="function">
    <text evidence="4">Catalyzes the transfer of a methyl group onto N-acetylserotonin, producing melatonin (N-acetyl-5-methoxytryptamine).</text>
</comment>
<comment type="catalytic activity">
    <reaction evidence="4">
        <text>N-acetylserotonin + S-adenosyl-L-methionine = melatonin + S-adenosyl-L-homocysteine + H(+)</text>
        <dbReference type="Rhea" id="RHEA:15573"/>
        <dbReference type="ChEBI" id="CHEBI:15378"/>
        <dbReference type="ChEBI" id="CHEBI:16796"/>
        <dbReference type="ChEBI" id="CHEBI:17697"/>
        <dbReference type="ChEBI" id="CHEBI:57856"/>
        <dbReference type="ChEBI" id="CHEBI:59789"/>
        <dbReference type="EC" id="2.1.1.4"/>
    </reaction>
    <physiologicalReaction direction="left-to-right" evidence="6">
        <dbReference type="Rhea" id="RHEA:15574"/>
    </physiologicalReaction>
</comment>
<comment type="pathway">
    <text evidence="4">Aromatic compound metabolism; melatonin biosynthesis; melatonin from serotonin: step 1/2.</text>
</comment>
<comment type="subunit">
    <text evidence="1">Homodimer.</text>
</comment>
<comment type="tissue specificity">
    <text evidence="4">Expressed predominantly in the pineal gland (at protein level). Very low expression, if any, in the retina.</text>
</comment>
<comment type="induction">
    <text evidence="4">Exhibits very subtle night/day variation, if any.</text>
</comment>
<comment type="miscellaneous">
    <text evidence="6">Pineal melatonin synthesis is severely compromised in most inbred strains. In many inbred strains, genetic defects in ASMT have been identified. Melatonin production may have an impact on gonadal development, testis development being significantly promoted in melatonin-deficient C57BL/6J x Mus musculus molossinus animals (PubMed:20308563).</text>
</comment>
<comment type="similarity">
    <text evidence="2">Belongs to the class I-like SAM-binding methyltransferase superfamily. Cation-independent O-methyltransferase family.</text>
</comment>
<protein>
    <recommendedName>
        <fullName>Acetylserotonin O-methyltransferase</fullName>
        <ecNumber evidence="4">2.1.1.4</ecNumber>
    </recommendedName>
    <alternativeName>
        <fullName>Hydroxyindole O-methyltransferase</fullName>
    </alternativeName>
</protein>
<sequence length="387" mass="40925">MHRGRSASARQERDFRALMDLAHGFMASQVLFAGCALRVFDAAALGPVDAAALARSSGLSPRGTRLLLDACAGLGLLRRRRGAGPRGPAYTNSPLASTFLVAGSPLSQRSLLLYLAGTTYLCWGHLADGVREGRSQYARAVGVDADDPFTAIYRSEAERLLFMRGLQETWSLCGGRVLTAFDLSPFRVICDLGGGSGALARMAARLYPGSEVTVFETPDVVAAARAHFPPPADEDGAEPRVRFLSGDFFRSPLPPADLYVLARVLHDWADAACVELLRRVRGALRPGGAVLLVESVLSPGGAGPTRTLLLSLTMLLQARGRERTEAEYRALTARAGFSRLRLRRPRGPYHAMMAARGGGAGARSDGGGGDATSQTGSGTGSEVGAQD</sequence>
<reference key="1">
    <citation type="journal article" date="2010" name="Proc. Natl. Acad. Sci. U.S.A.">
        <title>Genetic variation of melatonin productivity in laboratory mice under domestication.</title>
        <authorList>
            <person name="Kasahara T."/>
            <person name="Abe K."/>
            <person name="Mekada K."/>
            <person name="Yoshiki A."/>
            <person name="Kato T."/>
        </authorList>
    </citation>
    <scope>NUCLEOTIDE SEQUENCE [GENOMIC DNA / MRNA]</scope>
    <scope>CATALYTIC ACTIVITY</scope>
    <scope>VARIANTS GLY-78 AND CYS-242</scope>
    <scope>IDENTIFICATION OF STRAIN-SPECIFIC VARIANTS</scope>
    <scope>INDUCTION</scope>
    <scope>TISSUE SPECIFICITY</scope>
    <source>
        <strain>C3H/He</strain>
        <strain>C57BL/6J</strain>
        <tissue>Pineal gland</tissue>
    </source>
</reference>
<organism>
    <name type="scientific">Mus musculus</name>
    <name type="common">Mouse</name>
    <dbReference type="NCBI Taxonomy" id="10090"/>
    <lineage>
        <taxon>Eukaryota</taxon>
        <taxon>Metazoa</taxon>
        <taxon>Chordata</taxon>
        <taxon>Craniata</taxon>
        <taxon>Vertebrata</taxon>
        <taxon>Euteleostomi</taxon>
        <taxon>Mammalia</taxon>
        <taxon>Eutheria</taxon>
        <taxon>Euarchontoglires</taxon>
        <taxon>Glires</taxon>
        <taxon>Rodentia</taxon>
        <taxon>Myomorpha</taxon>
        <taxon>Muroidea</taxon>
        <taxon>Muridae</taxon>
        <taxon>Murinae</taxon>
        <taxon>Mus</taxon>
        <taxon>Mus</taxon>
    </lineage>
</organism>
<name>ASMT_MOUSE</name>
<accession>D3KU66</accession>
<accession>D3KU65</accession>